<evidence type="ECO:0000255" key="1">
    <source>
        <dbReference type="HAMAP-Rule" id="MF_01347"/>
    </source>
</evidence>
<sequence>MQEGKISQIIGPVVDVDFAEGQLPSILDALTVTRQDGSKLVLETQQHLGEERVRRIAMEGTDGLVRGMSAKNTGKPIQVPVGEEVLGRMLNVVGDPIDGKGPVLSKKSYSIHRTAPKFDELSTKAEMFETGIKVIDLLEPYSRGGKTGLFGGAGVGKTVLIMELINNIAKEQSGFSVFAGVGERTREGNDLWHEMMESGVIDKTALVFGQMNEPPGARARVALTGLSIAEYFRDEEGRDVLLFIDNIFRFTQAGSEVSALLGRMPSAVGYQPTLSTEMGELQDRITSTKKGSVTSVQAIYVPADDLTDPAPATAFTHLDATTVLSRQIAELGIYPAVDPLDSTSRILDPNVIGDDHYDTAQAVKQILQRYKDLQDIIAILGMDELSDDDKLVVARARKVQRFLSQPFFVAEAFTGLAGKYVKLEDTIKGFKEIIAGRHDNLPEAAFYLVGTIEEAVAKVKTL</sequence>
<dbReference type="EC" id="7.1.2.2" evidence="1"/>
<dbReference type="EMBL" id="S56812">
    <property type="protein sequence ID" value="AAB25774.1"/>
    <property type="molecule type" value="Genomic_DNA"/>
</dbReference>
<dbReference type="PIR" id="S30178">
    <property type="entry name" value="S30178"/>
</dbReference>
<dbReference type="SMR" id="P35110"/>
<dbReference type="GO" id="GO:0005886">
    <property type="term" value="C:plasma membrane"/>
    <property type="evidence" value="ECO:0007669"/>
    <property type="project" value="UniProtKB-SubCell"/>
</dbReference>
<dbReference type="GO" id="GO:0045259">
    <property type="term" value="C:proton-transporting ATP synthase complex"/>
    <property type="evidence" value="ECO:0007669"/>
    <property type="project" value="UniProtKB-KW"/>
</dbReference>
<dbReference type="GO" id="GO:0005524">
    <property type="term" value="F:ATP binding"/>
    <property type="evidence" value="ECO:0007669"/>
    <property type="project" value="UniProtKB-UniRule"/>
</dbReference>
<dbReference type="GO" id="GO:0016887">
    <property type="term" value="F:ATP hydrolysis activity"/>
    <property type="evidence" value="ECO:0007669"/>
    <property type="project" value="InterPro"/>
</dbReference>
<dbReference type="GO" id="GO:0046933">
    <property type="term" value="F:proton-transporting ATP synthase activity, rotational mechanism"/>
    <property type="evidence" value="ECO:0007669"/>
    <property type="project" value="UniProtKB-UniRule"/>
</dbReference>
<dbReference type="CDD" id="cd18110">
    <property type="entry name" value="ATP-synt_F1_beta_C"/>
    <property type="match status" value="1"/>
</dbReference>
<dbReference type="CDD" id="cd18115">
    <property type="entry name" value="ATP-synt_F1_beta_N"/>
    <property type="match status" value="1"/>
</dbReference>
<dbReference type="CDD" id="cd01133">
    <property type="entry name" value="F1-ATPase_beta_CD"/>
    <property type="match status" value="1"/>
</dbReference>
<dbReference type="FunFam" id="1.10.1140.10:FF:000001">
    <property type="entry name" value="ATP synthase subunit beta"/>
    <property type="match status" value="1"/>
</dbReference>
<dbReference type="FunFam" id="3.40.50.300:FF:000026">
    <property type="entry name" value="ATP synthase subunit beta"/>
    <property type="match status" value="1"/>
</dbReference>
<dbReference type="Gene3D" id="2.40.10.170">
    <property type="match status" value="1"/>
</dbReference>
<dbReference type="Gene3D" id="1.10.1140.10">
    <property type="entry name" value="Bovine Mitochondrial F1-atpase, Atp Synthase Beta Chain, Chain D, domain 3"/>
    <property type="match status" value="1"/>
</dbReference>
<dbReference type="Gene3D" id="3.40.50.300">
    <property type="entry name" value="P-loop containing nucleotide triphosphate hydrolases"/>
    <property type="match status" value="1"/>
</dbReference>
<dbReference type="HAMAP" id="MF_01347">
    <property type="entry name" value="ATP_synth_beta_bact"/>
    <property type="match status" value="1"/>
</dbReference>
<dbReference type="InterPro" id="IPR003593">
    <property type="entry name" value="AAA+_ATPase"/>
</dbReference>
<dbReference type="InterPro" id="IPR055190">
    <property type="entry name" value="ATP-synt_VA_C"/>
</dbReference>
<dbReference type="InterPro" id="IPR005722">
    <property type="entry name" value="ATP_synth_F1_bsu"/>
</dbReference>
<dbReference type="InterPro" id="IPR020003">
    <property type="entry name" value="ATPase_a/bsu_AS"/>
</dbReference>
<dbReference type="InterPro" id="IPR050053">
    <property type="entry name" value="ATPase_alpha/beta_chains"/>
</dbReference>
<dbReference type="InterPro" id="IPR004100">
    <property type="entry name" value="ATPase_F1/V1/A1_a/bsu_N"/>
</dbReference>
<dbReference type="InterPro" id="IPR036121">
    <property type="entry name" value="ATPase_F1/V1/A1_a/bsu_N_sf"/>
</dbReference>
<dbReference type="InterPro" id="IPR000194">
    <property type="entry name" value="ATPase_F1/V1/A1_a/bsu_nucl-bd"/>
</dbReference>
<dbReference type="InterPro" id="IPR024034">
    <property type="entry name" value="ATPase_F1/V1_b/a_C"/>
</dbReference>
<dbReference type="InterPro" id="IPR027417">
    <property type="entry name" value="P-loop_NTPase"/>
</dbReference>
<dbReference type="NCBIfam" id="TIGR01039">
    <property type="entry name" value="atpD"/>
    <property type="match status" value="1"/>
</dbReference>
<dbReference type="PANTHER" id="PTHR15184">
    <property type="entry name" value="ATP SYNTHASE"/>
    <property type="match status" value="1"/>
</dbReference>
<dbReference type="PANTHER" id="PTHR15184:SF71">
    <property type="entry name" value="ATP SYNTHASE SUBUNIT BETA, MITOCHONDRIAL"/>
    <property type="match status" value="1"/>
</dbReference>
<dbReference type="Pfam" id="PF00006">
    <property type="entry name" value="ATP-synt_ab"/>
    <property type="match status" value="1"/>
</dbReference>
<dbReference type="Pfam" id="PF02874">
    <property type="entry name" value="ATP-synt_ab_N"/>
    <property type="match status" value="1"/>
</dbReference>
<dbReference type="Pfam" id="PF22919">
    <property type="entry name" value="ATP-synt_VA_C"/>
    <property type="match status" value="1"/>
</dbReference>
<dbReference type="PIRSF" id="PIRSF039072">
    <property type="entry name" value="ATPase_subunit_beta"/>
    <property type="match status" value="1"/>
</dbReference>
<dbReference type="SMART" id="SM00382">
    <property type="entry name" value="AAA"/>
    <property type="match status" value="1"/>
</dbReference>
<dbReference type="SUPFAM" id="SSF47917">
    <property type="entry name" value="C-terminal domain of alpha and beta subunits of F1 ATP synthase"/>
    <property type="match status" value="1"/>
</dbReference>
<dbReference type="SUPFAM" id="SSF50615">
    <property type="entry name" value="N-terminal domain of alpha and beta subunits of F1 ATP synthase"/>
    <property type="match status" value="1"/>
</dbReference>
<dbReference type="SUPFAM" id="SSF52540">
    <property type="entry name" value="P-loop containing nucleoside triphosphate hydrolases"/>
    <property type="match status" value="1"/>
</dbReference>
<dbReference type="PROSITE" id="PS00152">
    <property type="entry name" value="ATPASE_ALPHA_BETA"/>
    <property type="match status" value="1"/>
</dbReference>
<protein>
    <recommendedName>
        <fullName evidence="1">ATP synthase subunit beta</fullName>
        <ecNumber evidence="1">7.1.2.2</ecNumber>
    </recommendedName>
    <alternativeName>
        <fullName evidence="1">ATP synthase F1 sector subunit beta</fullName>
    </alternativeName>
    <alternativeName>
        <fullName evidence="1">F-ATPase subunit beta</fullName>
    </alternativeName>
</protein>
<feature type="chain" id="PRO_0000144430" description="ATP synthase subunit beta">
    <location>
        <begin position="1"/>
        <end position="462"/>
    </location>
</feature>
<feature type="binding site" evidence="1">
    <location>
        <begin position="151"/>
        <end position="158"/>
    </location>
    <ligand>
        <name>ATP</name>
        <dbReference type="ChEBI" id="CHEBI:30616"/>
    </ligand>
</feature>
<name>ATPB_CHLLI</name>
<gene>
    <name evidence="1" type="primary">atpD</name>
    <name evidence="1" type="synonym">atpB</name>
</gene>
<comment type="function">
    <text evidence="1">Produces ATP from ADP in the presence of a proton gradient across the membrane. The catalytic sites are hosted primarily by the beta subunits.</text>
</comment>
<comment type="catalytic activity">
    <reaction evidence="1">
        <text>ATP + H2O + 4 H(+)(in) = ADP + phosphate + 5 H(+)(out)</text>
        <dbReference type="Rhea" id="RHEA:57720"/>
        <dbReference type="ChEBI" id="CHEBI:15377"/>
        <dbReference type="ChEBI" id="CHEBI:15378"/>
        <dbReference type="ChEBI" id="CHEBI:30616"/>
        <dbReference type="ChEBI" id="CHEBI:43474"/>
        <dbReference type="ChEBI" id="CHEBI:456216"/>
        <dbReference type="EC" id="7.1.2.2"/>
    </reaction>
</comment>
<comment type="subunit">
    <text evidence="1">F-type ATPases have 2 components, CF(1) - the catalytic core - and CF(0) - the membrane proton channel. CF(1) has five subunits: alpha(3), beta(3), gamma(1), delta(1), epsilon(1). CF(0) has three main subunits: a(1), b(2) and c(9-12). The alpha and beta chains form an alternating ring which encloses part of the gamma chain. CF(1) is attached to CF(0) by a central stalk formed by the gamma and epsilon chains, while a peripheral stalk is formed by the delta and b chains.</text>
</comment>
<comment type="subcellular location">
    <subcellularLocation>
        <location evidence="1">Cell inner membrane</location>
        <topology evidence="1">Peripheral membrane protein</topology>
    </subcellularLocation>
</comment>
<comment type="similarity">
    <text evidence="1">Belongs to the ATPase alpha/beta chains family.</text>
</comment>
<accession>P35110</accession>
<proteinExistence type="inferred from homology"/>
<reference key="1">
    <citation type="journal article" date="1993" name="Biochim. Biophys. Acta">
        <title>The atp2 operon of the green bacterium Chlorobium limicola.</title>
        <authorList>
            <person name="Xie D.L."/>
            <person name="Lill H."/>
            <person name="Hauska G."/>
            <person name="Maeda M."/>
            <person name="Futai M."/>
            <person name="Nelson N."/>
        </authorList>
    </citation>
    <scope>NUCLEOTIDE SEQUENCE [GENOMIC DNA]</scope>
</reference>
<organism>
    <name type="scientific">Chlorobium limicola</name>
    <dbReference type="NCBI Taxonomy" id="1092"/>
    <lineage>
        <taxon>Bacteria</taxon>
        <taxon>Pseudomonadati</taxon>
        <taxon>Chlorobiota</taxon>
        <taxon>Chlorobiia</taxon>
        <taxon>Chlorobiales</taxon>
        <taxon>Chlorobiaceae</taxon>
        <taxon>Chlorobium/Pelodictyon group</taxon>
        <taxon>Chlorobium</taxon>
    </lineage>
</organism>
<keyword id="KW-0066">ATP synthesis</keyword>
<keyword id="KW-0067">ATP-binding</keyword>
<keyword id="KW-0997">Cell inner membrane</keyword>
<keyword id="KW-1003">Cell membrane</keyword>
<keyword id="KW-0139">CF(1)</keyword>
<keyword id="KW-0375">Hydrogen ion transport</keyword>
<keyword id="KW-0406">Ion transport</keyword>
<keyword id="KW-0472">Membrane</keyword>
<keyword id="KW-0547">Nucleotide-binding</keyword>
<keyword id="KW-1278">Translocase</keyword>
<keyword id="KW-0813">Transport</keyword>